<sequence length="313" mass="36424">MPIKIPDQLPATEVLREENIFFMQESRATTQAIRPLKVIILNLMPKKIETETQFLRLLSNSPLQVDVELLRIDNRTSKNTPTEHLDTFYRQFEGIKDRNFDGLIITGAPLGLVQFEDVIYWDHLQTIMTWAKDHVTSSLYVCWAAQAGLKLLYDLPKRTRKEKLSGVYKHTNLDQHHPILRGFDDQFLAPHSRYADFSADYLKSHTDLDILATSKEAGVYLAATKDKRNVFVTGHPEYDSFTLHNEYVRDLGEGMEPTIPVNYYPDDNPDITPKATWRSHGHLLFSNWLNYCVYQQTPYDLEHFSEQNFTRDE</sequence>
<organism>
    <name type="scientific">Aliivibrio fischeri (strain MJ11)</name>
    <name type="common">Vibrio fischeri</name>
    <dbReference type="NCBI Taxonomy" id="388396"/>
    <lineage>
        <taxon>Bacteria</taxon>
        <taxon>Pseudomonadati</taxon>
        <taxon>Pseudomonadota</taxon>
        <taxon>Gammaproteobacteria</taxon>
        <taxon>Vibrionales</taxon>
        <taxon>Vibrionaceae</taxon>
        <taxon>Aliivibrio</taxon>
    </lineage>
</organism>
<feature type="chain" id="PRO_1000115201" description="Homoserine O-succinyltransferase">
    <location>
        <begin position="1"/>
        <end position="313"/>
    </location>
</feature>
<feature type="active site" description="Acyl-thioester intermediate" evidence="1">
    <location>
        <position position="142"/>
    </location>
</feature>
<feature type="active site" description="Proton acceptor" evidence="1">
    <location>
        <position position="235"/>
    </location>
</feature>
<feature type="active site" evidence="1">
    <location>
        <position position="237"/>
    </location>
</feature>
<feature type="binding site" evidence="1">
    <location>
        <position position="163"/>
    </location>
    <ligand>
        <name>substrate</name>
    </ligand>
</feature>
<feature type="binding site" evidence="1">
    <location>
        <position position="192"/>
    </location>
    <ligand>
        <name>substrate</name>
    </ligand>
</feature>
<feature type="binding site" evidence="1">
    <location>
        <position position="249"/>
    </location>
    <ligand>
        <name>substrate</name>
    </ligand>
</feature>
<feature type="site" description="Important for acyl-CoA specificity" evidence="1">
    <location>
        <position position="111"/>
    </location>
</feature>
<feature type="site" description="Important for substrate specificity" evidence="1">
    <location>
        <position position="192"/>
    </location>
</feature>
<accession>B5FA49</accession>
<dbReference type="EC" id="2.3.1.46" evidence="1"/>
<dbReference type="EMBL" id="CP001139">
    <property type="protein sequence ID" value="ACH66787.1"/>
    <property type="molecule type" value="Genomic_DNA"/>
</dbReference>
<dbReference type="RefSeq" id="WP_005420682.1">
    <property type="nucleotide sequence ID" value="NC_011184.1"/>
</dbReference>
<dbReference type="SMR" id="B5FA49"/>
<dbReference type="KEGG" id="vfm:VFMJ11_2169"/>
<dbReference type="HOGENOM" id="CLU_057851_0_1_6"/>
<dbReference type="UniPathway" id="UPA00051">
    <property type="reaction ID" value="UER00075"/>
</dbReference>
<dbReference type="Proteomes" id="UP000001857">
    <property type="component" value="Chromosome I"/>
</dbReference>
<dbReference type="GO" id="GO:0005737">
    <property type="term" value="C:cytoplasm"/>
    <property type="evidence" value="ECO:0007669"/>
    <property type="project" value="UniProtKB-SubCell"/>
</dbReference>
<dbReference type="GO" id="GO:0004414">
    <property type="term" value="F:homoserine O-acetyltransferase activity"/>
    <property type="evidence" value="ECO:0007669"/>
    <property type="project" value="UniProtKB-UniRule"/>
</dbReference>
<dbReference type="GO" id="GO:0008899">
    <property type="term" value="F:homoserine O-succinyltransferase activity"/>
    <property type="evidence" value="ECO:0007669"/>
    <property type="project" value="UniProtKB-EC"/>
</dbReference>
<dbReference type="GO" id="GO:0019281">
    <property type="term" value="P:L-methionine biosynthetic process from homoserine via O-succinyl-L-homoserine and cystathionine"/>
    <property type="evidence" value="ECO:0007669"/>
    <property type="project" value="InterPro"/>
</dbReference>
<dbReference type="CDD" id="cd03131">
    <property type="entry name" value="GATase1_HTS"/>
    <property type="match status" value="1"/>
</dbReference>
<dbReference type="FunFam" id="3.40.50.880:FF:000004">
    <property type="entry name" value="Homoserine O-succinyltransferase"/>
    <property type="match status" value="1"/>
</dbReference>
<dbReference type="Gene3D" id="3.40.50.880">
    <property type="match status" value="1"/>
</dbReference>
<dbReference type="HAMAP" id="MF_00295">
    <property type="entry name" value="MetA_acyltransf"/>
    <property type="match status" value="1"/>
</dbReference>
<dbReference type="InterPro" id="IPR029062">
    <property type="entry name" value="Class_I_gatase-like"/>
</dbReference>
<dbReference type="InterPro" id="IPR005697">
    <property type="entry name" value="HST_MetA"/>
</dbReference>
<dbReference type="InterPro" id="IPR033752">
    <property type="entry name" value="MetA_family"/>
</dbReference>
<dbReference type="NCBIfam" id="TIGR01001">
    <property type="entry name" value="metA"/>
    <property type="match status" value="1"/>
</dbReference>
<dbReference type="PANTHER" id="PTHR20919">
    <property type="entry name" value="HOMOSERINE O-SUCCINYLTRANSFERASE"/>
    <property type="match status" value="1"/>
</dbReference>
<dbReference type="PANTHER" id="PTHR20919:SF0">
    <property type="entry name" value="HOMOSERINE O-SUCCINYLTRANSFERASE"/>
    <property type="match status" value="1"/>
</dbReference>
<dbReference type="Pfam" id="PF04204">
    <property type="entry name" value="HTS"/>
    <property type="match status" value="1"/>
</dbReference>
<dbReference type="PIRSF" id="PIRSF000450">
    <property type="entry name" value="H_ser_succinyltr"/>
    <property type="match status" value="1"/>
</dbReference>
<dbReference type="SUPFAM" id="SSF52317">
    <property type="entry name" value="Class I glutamine amidotransferase-like"/>
    <property type="match status" value="1"/>
</dbReference>
<proteinExistence type="inferred from homology"/>
<reference key="1">
    <citation type="submission" date="2008-08" db="EMBL/GenBank/DDBJ databases">
        <title>Complete sequence of Vibrio fischeri strain MJ11.</title>
        <authorList>
            <person name="Mandel M.J."/>
            <person name="Stabb E.V."/>
            <person name="Ruby E.G."/>
            <person name="Ferriera S."/>
            <person name="Johnson J."/>
            <person name="Kravitz S."/>
            <person name="Beeson K."/>
            <person name="Sutton G."/>
            <person name="Rogers Y.-H."/>
            <person name="Friedman R."/>
            <person name="Frazier M."/>
            <person name="Venter J.C."/>
        </authorList>
    </citation>
    <scope>NUCLEOTIDE SEQUENCE [LARGE SCALE GENOMIC DNA]</scope>
    <source>
        <strain>MJ11</strain>
    </source>
</reference>
<keyword id="KW-0012">Acyltransferase</keyword>
<keyword id="KW-0028">Amino-acid biosynthesis</keyword>
<keyword id="KW-0963">Cytoplasm</keyword>
<keyword id="KW-0486">Methionine biosynthesis</keyword>
<keyword id="KW-0808">Transferase</keyword>
<gene>
    <name evidence="1" type="primary">metAS</name>
    <name type="ordered locus">VFMJ11_2169</name>
</gene>
<protein>
    <recommendedName>
        <fullName evidence="1">Homoserine O-succinyltransferase</fullName>
        <shortName evidence="1">HST</shortName>
        <ecNumber evidence="1">2.3.1.46</ecNumber>
    </recommendedName>
    <alternativeName>
        <fullName evidence="1">Homoserine transsuccinylase</fullName>
        <shortName evidence="1">HTS</shortName>
    </alternativeName>
</protein>
<evidence type="ECO:0000255" key="1">
    <source>
        <dbReference type="HAMAP-Rule" id="MF_00295"/>
    </source>
</evidence>
<name>METAS_ALIFM</name>
<comment type="function">
    <text evidence="1">Transfers a succinyl group from succinyl-CoA to L-homoserine, forming succinyl-L-homoserine.</text>
</comment>
<comment type="catalytic activity">
    <reaction evidence="1">
        <text>L-homoserine + succinyl-CoA = O-succinyl-L-homoserine + CoA</text>
        <dbReference type="Rhea" id="RHEA:22008"/>
        <dbReference type="ChEBI" id="CHEBI:57287"/>
        <dbReference type="ChEBI" id="CHEBI:57292"/>
        <dbReference type="ChEBI" id="CHEBI:57476"/>
        <dbReference type="ChEBI" id="CHEBI:57661"/>
        <dbReference type="EC" id="2.3.1.46"/>
    </reaction>
</comment>
<comment type="pathway">
    <text evidence="1">Amino-acid biosynthesis; L-methionine biosynthesis via de novo pathway; O-succinyl-L-homoserine from L-homoserine: step 1/1.</text>
</comment>
<comment type="subcellular location">
    <subcellularLocation>
        <location evidence="1">Cytoplasm</location>
    </subcellularLocation>
</comment>
<comment type="similarity">
    <text evidence="1">Belongs to the MetA family.</text>
</comment>